<reference key="1">
    <citation type="journal article" date="2005" name="Nucleic Acids Res.">
        <title>The genome sequence of Salmonella enterica serovar Choleraesuis, a highly invasive and resistant zoonotic pathogen.</title>
        <authorList>
            <person name="Chiu C.-H."/>
            <person name="Tang P."/>
            <person name="Chu C."/>
            <person name="Hu S."/>
            <person name="Bao Q."/>
            <person name="Yu J."/>
            <person name="Chou Y.-Y."/>
            <person name="Wang H.-S."/>
            <person name="Lee Y.-S."/>
        </authorList>
    </citation>
    <scope>NUCLEOTIDE SEQUENCE [LARGE SCALE GENOMIC DNA]</scope>
    <source>
        <strain>SC-B67</strain>
    </source>
</reference>
<keyword id="KW-0687">Ribonucleoprotein</keyword>
<keyword id="KW-0689">Ribosomal protein</keyword>
<keyword id="KW-0694">RNA-binding</keyword>
<keyword id="KW-0699">rRNA-binding</keyword>
<evidence type="ECO:0000255" key="1">
    <source>
        <dbReference type="HAMAP-Rule" id="MF_01309"/>
    </source>
</evidence>
<evidence type="ECO:0000305" key="2"/>
<name>RS3_SALCH</name>
<sequence length="233" mass="25983">MGQKVHPNGIRLGIVKPWNSTWFANTKEFADNLDSDFKVRQYLTKELAKASVSRIVIERPAKSIRVTIHTARPGIVIGKKGEDVEKLRKVVADIAGVPAQINIAEVRKPELDAKLVADSITSQLERRVMFRRAMKRAVQNAMRLGAKGIKVEVSGRLGGAEIARTEWYREGRVPLHTLRADIDYNTSEAHTTYGVIGVKVWIFKGEILGGMAAVEQPEKPAAQPKKQQRKGRK</sequence>
<protein>
    <recommendedName>
        <fullName evidence="1">Small ribosomal subunit protein uS3</fullName>
    </recommendedName>
    <alternativeName>
        <fullName evidence="2">30S ribosomal protein S3</fullName>
    </alternativeName>
</protein>
<gene>
    <name evidence="1" type="primary">rpsC</name>
    <name type="ordered locus">SCH_3368</name>
</gene>
<dbReference type="EMBL" id="AE017220">
    <property type="protein sequence ID" value="AAX67274.1"/>
    <property type="molecule type" value="Genomic_DNA"/>
</dbReference>
<dbReference type="RefSeq" id="WP_000529945.1">
    <property type="nucleotide sequence ID" value="NC_006905.1"/>
</dbReference>
<dbReference type="SMR" id="Q57J38"/>
<dbReference type="GeneID" id="97603663"/>
<dbReference type="KEGG" id="sec:SCH_3368"/>
<dbReference type="HOGENOM" id="CLU_058591_0_2_6"/>
<dbReference type="Proteomes" id="UP000000538">
    <property type="component" value="Chromosome"/>
</dbReference>
<dbReference type="GO" id="GO:0022627">
    <property type="term" value="C:cytosolic small ribosomal subunit"/>
    <property type="evidence" value="ECO:0007669"/>
    <property type="project" value="TreeGrafter"/>
</dbReference>
<dbReference type="GO" id="GO:0003729">
    <property type="term" value="F:mRNA binding"/>
    <property type="evidence" value="ECO:0007669"/>
    <property type="project" value="UniProtKB-UniRule"/>
</dbReference>
<dbReference type="GO" id="GO:0019843">
    <property type="term" value="F:rRNA binding"/>
    <property type="evidence" value="ECO:0007669"/>
    <property type="project" value="UniProtKB-UniRule"/>
</dbReference>
<dbReference type="GO" id="GO:0003735">
    <property type="term" value="F:structural constituent of ribosome"/>
    <property type="evidence" value="ECO:0007669"/>
    <property type="project" value="InterPro"/>
</dbReference>
<dbReference type="GO" id="GO:0006412">
    <property type="term" value="P:translation"/>
    <property type="evidence" value="ECO:0007669"/>
    <property type="project" value="UniProtKB-UniRule"/>
</dbReference>
<dbReference type="CDD" id="cd02412">
    <property type="entry name" value="KH-II_30S_S3"/>
    <property type="match status" value="1"/>
</dbReference>
<dbReference type="FunFam" id="3.30.1140.32:FF:000001">
    <property type="entry name" value="30S ribosomal protein S3"/>
    <property type="match status" value="1"/>
</dbReference>
<dbReference type="FunFam" id="3.30.300.20:FF:000001">
    <property type="entry name" value="30S ribosomal protein S3"/>
    <property type="match status" value="1"/>
</dbReference>
<dbReference type="Gene3D" id="3.30.300.20">
    <property type="match status" value="1"/>
</dbReference>
<dbReference type="Gene3D" id="3.30.1140.32">
    <property type="entry name" value="Ribosomal protein S3, C-terminal domain"/>
    <property type="match status" value="1"/>
</dbReference>
<dbReference type="HAMAP" id="MF_01309_B">
    <property type="entry name" value="Ribosomal_uS3_B"/>
    <property type="match status" value="1"/>
</dbReference>
<dbReference type="InterPro" id="IPR004087">
    <property type="entry name" value="KH_dom"/>
</dbReference>
<dbReference type="InterPro" id="IPR015946">
    <property type="entry name" value="KH_dom-like_a/b"/>
</dbReference>
<dbReference type="InterPro" id="IPR004044">
    <property type="entry name" value="KH_dom_type_2"/>
</dbReference>
<dbReference type="InterPro" id="IPR009019">
    <property type="entry name" value="KH_sf_prok-type"/>
</dbReference>
<dbReference type="InterPro" id="IPR036419">
    <property type="entry name" value="Ribosomal_S3_C_sf"/>
</dbReference>
<dbReference type="InterPro" id="IPR005704">
    <property type="entry name" value="Ribosomal_uS3_bac-typ"/>
</dbReference>
<dbReference type="InterPro" id="IPR001351">
    <property type="entry name" value="Ribosomal_uS3_C"/>
</dbReference>
<dbReference type="InterPro" id="IPR018280">
    <property type="entry name" value="Ribosomal_uS3_CS"/>
</dbReference>
<dbReference type="NCBIfam" id="TIGR01009">
    <property type="entry name" value="rpsC_bact"/>
    <property type="match status" value="1"/>
</dbReference>
<dbReference type="PANTHER" id="PTHR11760">
    <property type="entry name" value="30S/40S RIBOSOMAL PROTEIN S3"/>
    <property type="match status" value="1"/>
</dbReference>
<dbReference type="PANTHER" id="PTHR11760:SF19">
    <property type="entry name" value="SMALL RIBOSOMAL SUBUNIT PROTEIN US3C"/>
    <property type="match status" value="1"/>
</dbReference>
<dbReference type="Pfam" id="PF07650">
    <property type="entry name" value="KH_2"/>
    <property type="match status" value="1"/>
</dbReference>
<dbReference type="Pfam" id="PF00189">
    <property type="entry name" value="Ribosomal_S3_C"/>
    <property type="match status" value="1"/>
</dbReference>
<dbReference type="SMART" id="SM00322">
    <property type="entry name" value="KH"/>
    <property type="match status" value="1"/>
</dbReference>
<dbReference type="SUPFAM" id="SSF54814">
    <property type="entry name" value="Prokaryotic type KH domain (KH-domain type II)"/>
    <property type="match status" value="1"/>
</dbReference>
<dbReference type="SUPFAM" id="SSF54821">
    <property type="entry name" value="Ribosomal protein S3 C-terminal domain"/>
    <property type="match status" value="1"/>
</dbReference>
<dbReference type="PROSITE" id="PS50823">
    <property type="entry name" value="KH_TYPE_2"/>
    <property type="match status" value="1"/>
</dbReference>
<dbReference type="PROSITE" id="PS00548">
    <property type="entry name" value="RIBOSOMAL_S3"/>
    <property type="match status" value="1"/>
</dbReference>
<comment type="function">
    <text evidence="1">Binds the lower part of the 30S subunit head. Binds mRNA in the 70S ribosome, positioning it for translation.</text>
</comment>
<comment type="subunit">
    <text evidence="1">Part of the 30S ribosomal subunit. Forms a tight complex with proteins S10 and S14.</text>
</comment>
<comment type="similarity">
    <text evidence="1">Belongs to the universal ribosomal protein uS3 family.</text>
</comment>
<accession>Q57J38</accession>
<proteinExistence type="inferred from homology"/>
<feature type="chain" id="PRO_0000230725" description="Small ribosomal subunit protein uS3">
    <location>
        <begin position="1"/>
        <end position="233"/>
    </location>
</feature>
<feature type="domain" description="KH type-2" evidence="1">
    <location>
        <begin position="39"/>
        <end position="107"/>
    </location>
</feature>
<organism>
    <name type="scientific">Salmonella choleraesuis (strain SC-B67)</name>
    <dbReference type="NCBI Taxonomy" id="321314"/>
    <lineage>
        <taxon>Bacteria</taxon>
        <taxon>Pseudomonadati</taxon>
        <taxon>Pseudomonadota</taxon>
        <taxon>Gammaproteobacteria</taxon>
        <taxon>Enterobacterales</taxon>
        <taxon>Enterobacteriaceae</taxon>
        <taxon>Salmonella</taxon>
    </lineage>
</organism>